<organism>
    <name type="scientific">Enterococcus faecalis (strain ATCC 700802 / V583)</name>
    <dbReference type="NCBI Taxonomy" id="226185"/>
    <lineage>
        <taxon>Bacteria</taxon>
        <taxon>Bacillati</taxon>
        <taxon>Bacillota</taxon>
        <taxon>Bacilli</taxon>
        <taxon>Lactobacillales</taxon>
        <taxon>Enterococcaceae</taxon>
        <taxon>Enterococcus</taxon>
    </lineage>
</organism>
<evidence type="ECO:0000255" key="1">
    <source>
        <dbReference type="HAMAP-Rule" id="MF_00565"/>
    </source>
</evidence>
<sequence>MNIQETVLNILEDITGTDEVVNNQDIQLFEEGLLDSLATVQLLVEIEGQLGIQVPVSDFDREVWGTPKQIIQQVEALQ</sequence>
<feature type="chain" id="PRO_0000213088" description="D-alanyl carrier protein">
    <location>
        <begin position="1"/>
        <end position="78"/>
    </location>
</feature>
<feature type="domain" description="Carrier" evidence="1">
    <location>
        <begin position="1"/>
        <end position="78"/>
    </location>
</feature>
<feature type="modified residue" description="O-(pantetheine 4'-phosphoryl)serine" evidence="1">
    <location>
        <position position="36"/>
    </location>
</feature>
<keyword id="KW-0961">Cell wall biogenesis/degradation</keyword>
<keyword id="KW-0963">Cytoplasm</keyword>
<keyword id="KW-0596">Phosphopantetheine</keyword>
<keyword id="KW-0597">Phosphoprotein</keyword>
<keyword id="KW-1185">Reference proteome</keyword>
<comment type="function">
    <text evidence="1">Carrier protein involved in the D-alanylation of lipoteichoic acid (LTA). The loading of thioester-linked D-alanine onto DltC is catalyzed by D-alanine--D-alanyl carrier protein ligase DltA. The DltC-carried D-alanyl group is further transferred to cell membrane phosphatidylglycerol (PG) by forming an ester bond, probably catalyzed by DltD. D-alanylation of LTA plays an important role in modulating the properties of the cell wall in Gram-positive bacteria, influencing the net charge of the cell wall.</text>
</comment>
<comment type="pathway">
    <text evidence="1">Cell wall biogenesis; lipoteichoic acid biosynthesis.</text>
</comment>
<comment type="subcellular location">
    <subcellularLocation>
        <location evidence="1">Cytoplasm</location>
    </subcellularLocation>
</comment>
<comment type="PTM">
    <text evidence="1">4'-phosphopantetheine is transferred from CoA to a specific serine of apo-DCP.</text>
</comment>
<comment type="similarity">
    <text evidence="1">Belongs to the DltC family.</text>
</comment>
<accession>Q830N2</accession>
<dbReference type="EMBL" id="AE016830">
    <property type="protein sequence ID" value="AAO82446.1"/>
    <property type="molecule type" value="Genomic_DNA"/>
</dbReference>
<dbReference type="RefSeq" id="NP_816376.1">
    <property type="nucleotide sequence ID" value="NC_004668.1"/>
</dbReference>
<dbReference type="RefSeq" id="WP_002356389.1">
    <property type="nucleotide sequence ID" value="NZ_KE136528.1"/>
</dbReference>
<dbReference type="SMR" id="Q830N2"/>
<dbReference type="STRING" id="226185.EF_2747"/>
<dbReference type="EnsemblBacteria" id="AAO82446">
    <property type="protein sequence ID" value="AAO82446"/>
    <property type="gene ID" value="EF_2747"/>
</dbReference>
<dbReference type="GeneID" id="60894732"/>
<dbReference type="KEGG" id="efa:EF2747"/>
<dbReference type="PATRIC" id="fig|226185.45.peg.822"/>
<dbReference type="eggNOG" id="COG0236">
    <property type="taxonomic scope" value="Bacteria"/>
</dbReference>
<dbReference type="HOGENOM" id="CLU_108696_19_0_9"/>
<dbReference type="UniPathway" id="UPA00556"/>
<dbReference type="Proteomes" id="UP000001415">
    <property type="component" value="Chromosome"/>
</dbReference>
<dbReference type="GO" id="GO:0005737">
    <property type="term" value="C:cytoplasm"/>
    <property type="evidence" value="ECO:0007669"/>
    <property type="project" value="UniProtKB-SubCell"/>
</dbReference>
<dbReference type="GO" id="GO:0036370">
    <property type="term" value="F:D-alanyl carrier activity"/>
    <property type="evidence" value="ECO:0007669"/>
    <property type="project" value="UniProtKB-UniRule"/>
</dbReference>
<dbReference type="GO" id="GO:0071555">
    <property type="term" value="P:cell wall organization"/>
    <property type="evidence" value="ECO:0007669"/>
    <property type="project" value="UniProtKB-KW"/>
</dbReference>
<dbReference type="GO" id="GO:0070395">
    <property type="term" value="P:lipoteichoic acid biosynthetic process"/>
    <property type="evidence" value="ECO:0007669"/>
    <property type="project" value="UniProtKB-UniRule"/>
</dbReference>
<dbReference type="Gene3D" id="1.10.1200.10">
    <property type="entry name" value="ACP-like"/>
    <property type="match status" value="1"/>
</dbReference>
<dbReference type="HAMAP" id="MF_00565">
    <property type="entry name" value="DltC"/>
    <property type="match status" value="1"/>
</dbReference>
<dbReference type="InterPro" id="IPR036736">
    <property type="entry name" value="ACP-like_sf"/>
</dbReference>
<dbReference type="InterPro" id="IPR003230">
    <property type="entry name" value="DltC"/>
</dbReference>
<dbReference type="InterPro" id="IPR009081">
    <property type="entry name" value="PP-bd_ACP"/>
</dbReference>
<dbReference type="NCBIfam" id="TIGR01688">
    <property type="entry name" value="dltC"/>
    <property type="match status" value="1"/>
</dbReference>
<dbReference type="NCBIfam" id="NF003464">
    <property type="entry name" value="PRK05087.1"/>
    <property type="match status" value="1"/>
</dbReference>
<dbReference type="Pfam" id="PF00550">
    <property type="entry name" value="PP-binding"/>
    <property type="match status" value="1"/>
</dbReference>
<dbReference type="SUPFAM" id="SSF47336">
    <property type="entry name" value="ACP-like"/>
    <property type="match status" value="1"/>
</dbReference>
<dbReference type="PROSITE" id="PS50075">
    <property type="entry name" value="CARRIER"/>
    <property type="match status" value="1"/>
</dbReference>
<protein>
    <recommendedName>
        <fullName evidence="1">D-alanyl carrier protein</fullName>
        <shortName evidence="1">DCP</shortName>
    </recommendedName>
    <alternativeName>
        <fullName evidence="1">D-alanine--poly(phosphoribitol) ligase subunit 2</fullName>
    </alternativeName>
</protein>
<reference key="1">
    <citation type="journal article" date="2003" name="Science">
        <title>Role of mobile DNA in the evolution of vancomycin-resistant Enterococcus faecalis.</title>
        <authorList>
            <person name="Paulsen I.T."/>
            <person name="Banerjei L."/>
            <person name="Myers G.S.A."/>
            <person name="Nelson K.E."/>
            <person name="Seshadri R."/>
            <person name="Read T.D."/>
            <person name="Fouts D.E."/>
            <person name="Eisen J.A."/>
            <person name="Gill S.R."/>
            <person name="Heidelberg J.F."/>
            <person name="Tettelin H."/>
            <person name="Dodson R.J."/>
            <person name="Umayam L.A."/>
            <person name="Brinkac L.M."/>
            <person name="Beanan M.J."/>
            <person name="Daugherty S.C."/>
            <person name="DeBoy R.T."/>
            <person name="Durkin S.A."/>
            <person name="Kolonay J.F."/>
            <person name="Madupu R."/>
            <person name="Nelson W.C."/>
            <person name="Vamathevan J.J."/>
            <person name="Tran B."/>
            <person name="Upton J."/>
            <person name="Hansen T."/>
            <person name="Shetty J."/>
            <person name="Khouri H.M."/>
            <person name="Utterback T.R."/>
            <person name="Radune D."/>
            <person name="Ketchum K.A."/>
            <person name="Dougherty B.A."/>
            <person name="Fraser C.M."/>
        </authorList>
    </citation>
    <scope>NUCLEOTIDE SEQUENCE [LARGE SCALE GENOMIC DNA]</scope>
    <source>
        <strain>ATCC 700802 / V583</strain>
    </source>
</reference>
<gene>
    <name evidence="1" type="primary">dltC</name>
    <name type="ordered locus">EF_2747</name>
</gene>
<proteinExistence type="inferred from homology"/>
<name>DLTC_ENTFA</name>